<sequence>MSFKQLLYNLPTHLCCGLIHLYRWTISPLLGSPCRFFPSCSQYALQALKHHKCIRGLWLTIKRIGKCGPWHPGGIDLVPMTTLEEALDVSQVTNDDDSGDSHA</sequence>
<name>YIDD_CHLAB</name>
<proteinExistence type="inferred from homology"/>
<keyword id="KW-0997">Cell inner membrane</keyword>
<keyword id="KW-1003">Cell membrane</keyword>
<keyword id="KW-0472">Membrane</keyword>
<dbReference type="EMBL" id="CR848038">
    <property type="protein sequence ID" value="CAH63605.1"/>
    <property type="molecule type" value="Genomic_DNA"/>
</dbReference>
<dbReference type="KEGG" id="cab:CAB147"/>
<dbReference type="eggNOG" id="COG0759">
    <property type="taxonomic scope" value="Bacteria"/>
</dbReference>
<dbReference type="HOGENOM" id="CLU_144811_2_1_0"/>
<dbReference type="OrthoDB" id="9801753at2"/>
<dbReference type="Proteomes" id="UP000001012">
    <property type="component" value="Chromosome"/>
</dbReference>
<dbReference type="GO" id="GO:0005886">
    <property type="term" value="C:plasma membrane"/>
    <property type="evidence" value="ECO:0007669"/>
    <property type="project" value="UniProtKB-SubCell"/>
</dbReference>
<dbReference type="HAMAP" id="MF_00386">
    <property type="entry name" value="UPF0161_YidD"/>
    <property type="match status" value="1"/>
</dbReference>
<dbReference type="InterPro" id="IPR002696">
    <property type="entry name" value="Membr_insert_effic_factor_YidD"/>
</dbReference>
<dbReference type="NCBIfam" id="TIGR00278">
    <property type="entry name" value="membrane protein insertion efficiency factor YidD"/>
    <property type="match status" value="1"/>
</dbReference>
<dbReference type="PANTHER" id="PTHR33383">
    <property type="entry name" value="MEMBRANE PROTEIN INSERTION EFFICIENCY FACTOR-RELATED"/>
    <property type="match status" value="1"/>
</dbReference>
<dbReference type="PANTHER" id="PTHR33383:SF1">
    <property type="entry name" value="MEMBRANE PROTEIN INSERTION EFFICIENCY FACTOR-RELATED"/>
    <property type="match status" value="1"/>
</dbReference>
<dbReference type="Pfam" id="PF01809">
    <property type="entry name" value="YidD"/>
    <property type="match status" value="1"/>
</dbReference>
<dbReference type="SMART" id="SM01234">
    <property type="entry name" value="Haemolytic"/>
    <property type="match status" value="1"/>
</dbReference>
<reference key="1">
    <citation type="journal article" date="2005" name="Genome Res.">
        <title>The Chlamydophila abortus genome sequence reveals an array of variable proteins that contribute to interspecies variation.</title>
        <authorList>
            <person name="Thomson N.R."/>
            <person name="Yeats C."/>
            <person name="Bell K."/>
            <person name="Holden M.T.G."/>
            <person name="Bentley S.D."/>
            <person name="Livingstone M."/>
            <person name="Cerdeno-Tarraga A.-M."/>
            <person name="Harris B."/>
            <person name="Doggett J."/>
            <person name="Ormond D."/>
            <person name="Mungall K."/>
            <person name="Clarke K."/>
            <person name="Feltwell T."/>
            <person name="Hance Z."/>
            <person name="Sanders M."/>
            <person name="Quail M.A."/>
            <person name="Price C."/>
            <person name="Barrell B.G."/>
            <person name="Parkhill J."/>
            <person name="Longbottom D."/>
        </authorList>
    </citation>
    <scope>NUCLEOTIDE SEQUENCE [LARGE SCALE GENOMIC DNA]</scope>
    <source>
        <strain>DSM 27085 / S26/3</strain>
    </source>
</reference>
<gene>
    <name type="ordered locus">CAB147</name>
</gene>
<organism>
    <name type="scientific">Chlamydia abortus (strain DSM 27085 / S26/3)</name>
    <name type="common">Chlamydophila abortus</name>
    <dbReference type="NCBI Taxonomy" id="218497"/>
    <lineage>
        <taxon>Bacteria</taxon>
        <taxon>Pseudomonadati</taxon>
        <taxon>Chlamydiota</taxon>
        <taxon>Chlamydiia</taxon>
        <taxon>Chlamydiales</taxon>
        <taxon>Chlamydiaceae</taxon>
        <taxon>Chlamydia/Chlamydophila group</taxon>
        <taxon>Chlamydia</taxon>
    </lineage>
</organism>
<comment type="function">
    <text evidence="1">Could be involved in insertion of integral membrane proteins into the membrane.</text>
</comment>
<comment type="subcellular location">
    <subcellularLocation>
        <location evidence="1">Cell inner membrane</location>
        <topology evidence="1">Peripheral membrane protein</topology>
        <orientation evidence="1">Cytoplasmic side</orientation>
    </subcellularLocation>
</comment>
<comment type="similarity">
    <text evidence="1">Belongs to the UPF0161 family.</text>
</comment>
<feature type="chain" id="PRO_0000253096" description="Putative membrane protein insertion efficiency factor">
    <location>
        <begin position="1"/>
        <end position="103"/>
    </location>
</feature>
<evidence type="ECO:0000255" key="1">
    <source>
        <dbReference type="HAMAP-Rule" id="MF_00386"/>
    </source>
</evidence>
<accession>Q5L6W5</accession>
<protein>
    <recommendedName>
        <fullName evidence="1">Putative membrane protein insertion efficiency factor</fullName>
    </recommendedName>
</protein>